<protein>
    <recommendedName>
        <fullName evidence="1">tRNA 2-selenouridine synthase</fullName>
        <ecNumber evidence="1">2.9.1.3</ecNumber>
    </recommendedName>
</protein>
<evidence type="ECO:0000255" key="1">
    <source>
        <dbReference type="HAMAP-Rule" id="MF_01622"/>
    </source>
</evidence>
<gene>
    <name evidence="1" type="primary">selU</name>
    <name type="ordered locus">Pfl01_3754</name>
</gene>
<proteinExistence type="inferred from homology"/>
<sequence length="367" mass="41758">MSIDVTDYRDIFLNDRPLMDARAPVEFHKGAFPGAVNLPLMNDIERQRVGTCYKHHGQQAAIELGHQLVSGPVKEERIQAWAEFARTHPEGYLYCFRGGLRSQIVQQWLKSEAGVDYPRIGGGYKALRGFLIDTLESALTDCDFVLLGGMTGTGKTEVLAQLRNSVDLEGHANHRGSSFGKRATGQPSNIDFENRLAIDLLKKRAAGIDQFVLEDESRVVGSCALPLPLYQGMQQYPMVWLEDRFEQRVERILRDYVVDLSAEFQAVHGEEGFGRFCERLLESLDNVHKRLGGERHRRMRVLMEEALAEQGRSGAVELHRAWIEGLLREYYDPMYVFQREKKGGRIEFAGERQAVIEYLRQRGKSQA</sequence>
<reference key="1">
    <citation type="journal article" date="2009" name="Genome Biol.">
        <title>Genomic and genetic analyses of diversity and plant interactions of Pseudomonas fluorescens.</title>
        <authorList>
            <person name="Silby M.W."/>
            <person name="Cerdeno-Tarraga A.M."/>
            <person name="Vernikos G.S."/>
            <person name="Giddens S.R."/>
            <person name="Jackson R.W."/>
            <person name="Preston G.M."/>
            <person name="Zhang X.-X."/>
            <person name="Moon C.D."/>
            <person name="Gehrig S.M."/>
            <person name="Godfrey S.A.C."/>
            <person name="Knight C.G."/>
            <person name="Malone J.G."/>
            <person name="Robinson Z."/>
            <person name="Spiers A.J."/>
            <person name="Harris S."/>
            <person name="Challis G.L."/>
            <person name="Yaxley A.M."/>
            <person name="Harris D."/>
            <person name="Seeger K."/>
            <person name="Murphy L."/>
            <person name="Rutter S."/>
            <person name="Squares R."/>
            <person name="Quail M.A."/>
            <person name="Saunders E."/>
            <person name="Mavromatis K."/>
            <person name="Brettin T.S."/>
            <person name="Bentley S.D."/>
            <person name="Hothersall J."/>
            <person name="Stephens E."/>
            <person name="Thomas C.M."/>
            <person name="Parkhill J."/>
            <person name="Levy S.B."/>
            <person name="Rainey P.B."/>
            <person name="Thomson N.R."/>
        </authorList>
    </citation>
    <scope>NUCLEOTIDE SEQUENCE [LARGE SCALE GENOMIC DNA]</scope>
    <source>
        <strain>Pf0-1</strain>
    </source>
</reference>
<organism>
    <name type="scientific">Pseudomonas fluorescens (strain Pf0-1)</name>
    <dbReference type="NCBI Taxonomy" id="205922"/>
    <lineage>
        <taxon>Bacteria</taxon>
        <taxon>Pseudomonadati</taxon>
        <taxon>Pseudomonadota</taxon>
        <taxon>Gammaproteobacteria</taxon>
        <taxon>Pseudomonadales</taxon>
        <taxon>Pseudomonadaceae</taxon>
        <taxon>Pseudomonas</taxon>
    </lineage>
</organism>
<feature type="chain" id="PRO_0000292705" description="tRNA 2-selenouridine synthase">
    <location>
        <begin position="1"/>
        <end position="367"/>
    </location>
</feature>
<feature type="domain" description="Rhodanese" evidence="1">
    <location>
        <begin position="12"/>
        <end position="136"/>
    </location>
</feature>
<feature type="active site" description="S-selanylcysteine intermediate" evidence="1">
    <location>
        <position position="95"/>
    </location>
</feature>
<accession>Q3K9R2</accession>
<comment type="function">
    <text evidence="1">Involved in the post-transcriptional modification of the uridine at the wobble position (U34) of tRNA(Lys), tRNA(Glu) and tRNA(Gln). Catalyzes the conversion of 2-thiouridine (S2U-RNA) to 2-selenouridine (Se2U-RNA). Acts in a two-step process involving geranylation of 2-thiouridine (S2U) to S-geranyl-2-thiouridine (geS2U) and subsequent selenation of the latter derivative to 2-selenouridine (Se2U) in the tRNA chain.</text>
</comment>
<comment type="catalytic activity">
    <reaction evidence="1">
        <text>5-methylaminomethyl-2-thiouridine(34) in tRNA + selenophosphate + (2E)-geranyl diphosphate + H2O + H(+) = 5-methylaminomethyl-2-selenouridine(34) in tRNA + (2E)-thiogeraniol + phosphate + diphosphate</text>
        <dbReference type="Rhea" id="RHEA:42716"/>
        <dbReference type="Rhea" id="RHEA-COMP:10195"/>
        <dbReference type="Rhea" id="RHEA-COMP:10196"/>
        <dbReference type="ChEBI" id="CHEBI:15377"/>
        <dbReference type="ChEBI" id="CHEBI:15378"/>
        <dbReference type="ChEBI" id="CHEBI:16144"/>
        <dbReference type="ChEBI" id="CHEBI:33019"/>
        <dbReference type="ChEBI" id="CHEBI:43474"/>
        <dbReference type="ChEBI" id="CHEBI:58057"/>
        <dbReference type="ChEBI" id="CHEBI:74455"/>
        <dbReference type="ChEBI" id="CHEBI:82743"/>
        <dbReference type="ChEBI" id="CHEBI:143703"/>
        <dbReference type="EC" id="2.9.1.3"/>
    </reaction>
    <physiologicalReaction direction="left-to-right" evidence="1">
        <dbReference type="Rhea" id="RHEA:42717"/>
    </physiologicalReaction>
</comment>
<comment type="catalytic activity">
    <reaction evidence="1">
        <text>5-methylaminomethyl-2-thiouridine(34) in tRNA + (2E)-geranyl diphosphate = 5-methylaminomethyl-S-(2E)-geranyl-thiouridine(34) in tRNA + diphosphate</text>
        <dbReference type="Rhea" id="RHEA:14085"/>
        <dbReference type="Rhea" id="RHEA-COMP:10195"/>
        <dbReference type="Rhea" id="RHEA-COMP:14654"/>
        <dbReference type="ChEBI" id="CHEBI:33019"/>
        <dbReference type="ChEBI" id="CHEBI:58057"/>
        <dbReference type="ChEBI" id="CHEBI:74455"/>
        <dbReference type="ChEBI" id="CHEBI:140632"/>
    </reaction>
    <physiologicalReaction direction="left-to-right" evidence="1">
        <dbReference type="Rhea" id="RHEA:14086"/>
    </physiologicalReaction>
</comment>
<comment type="catalytic activity">
    <reaction evidence="1">
        <text>5-methylaminomethyl-S-(2E)-geranyl-thiouridine(34) in tRNA + selenophosphate + H(+) = 5-methylaminomethyl-2-(Se-phospho)selenouridine(34) in tRNA + (2E)-thiogeraniol</text>
        <dbReference type="Rhea" id="RHEA:60172"/>
        <dbReference type="Rhea" id="RHEA-COMP:14654"/>
        <dbReference type="Rhea" id="RHEA-COMP:15523"/>
        <dbReference type="ChEBI" id="CHEBI:15378"/>
        <dbReference type="ChEBI" id="CHEBI:16144"/>
        <dbReference type="ChEBI" id="CHEBI:140632"/>
        <dbReference type="ChEBI" id="CHEBI:143702"/>
        <dbReference type="ChEBI" id="CHEBI:143703"/>
    </reaction>
    <physiologicalReaction direction="left-to-right" evidence="1">
        <dbReference type="Rhea" id="RHEA:60173"/>
    </physiologicalReaction>
</comment>
<comment type="catalytic activity">
    <reaction evidence="1">
        <text>5-methylaminomethyl-2-(Se-phospho)selenouridine(34) in tRNA + H2O = 5-methylaminomethyl-2-selenouridine(34) in tRNA + phosphate</text>
        <dbReference type="Rhea" id="RHEA:60176"/>
        <dbReference type="Rhea" id="RHEA-COMP:10196"/>
        <dbReference type="Rhea" id="RHEA-COMP:15523"/>
        <dbReference type="ChEBI" id="CHEBI:15377"/>
        <dbReference type="ChEBI" id="CHEBI:43474"/>
        <dbReference type="ChEBI" id="CHEBI:82743"/>
        <dbReference type="ChEBI" id="CHEBI:143702"/>
    </reaction>
    <physiologicalReaction direction="left-to-right" evidence="1">
        <dbReference type="Rhea" id="RHEA:60177"/>
    </physiologicalReaction>
</comment>
<comment type="subunit">
    <text evidence="1">Monomer.</text>
</comment>
<comment type="similarity">
    <text evidence="1">Belongs to the SelU family.</text>
</comment>
<dbReference type="EC" id="2.9.1.3" evidence="1"/>
<dbReference type="EMBL" id="CP000094">
    <property type="protein sequence ID" value="ABA75492.1"/>
    <property type="molecule type" value="Genomic_DNA"/>
</dbReference>
<dbReference type="SMR" id="Q3K9R2"/>
<dbReference type="KEGG" id="pfo:Pfl01_3754"/>
<dbReference type="eggNOG" id="COG2603">
    <property type="taxonomic scope" value="Bacteria"/>
</dbReference>
<dbReference type="HOGENOM" id="CLU_043456_1_0_6"/>
<dbReference type="Proteomes" id="UP000002704">
    <property type="component" value="Chromosome"/>
</dbReference>
<dbReference type="GO" id="GO:0016765">
    <property type="term" value="F:transferase activity, transferring alkyl or aryl (other than methyl) groups"/>
    <property type="evidence" value="ECO:0007669"/>
    <property type="project" value="UniProtKB-UniRule"/>
</dbReference>
<dbReference type="GO" id="GO:0043828">
    <property type="term" value="F:tRNA 2-selenouridine synthase activity"/>
    <property type="evidence" value="ECO:0007669"/>
    <property type="project" value="UniProtKB-EC"/>
</dbReference>
<dbReference type="GO" id="GO:0002098">
    <property type="term" value="P:tRNA wobble uridine modification"/>
    <property type="evidence" value="ECO:0007669"/>
    <property type="project" value="UniProtKB-UniRule"/>
</dbReference>
<dbReference type="CDD" id="cd01520">
    <property type="entry name" value="RHOD_YbbB"/>
    <property type="match status" value="1"/>
</dbReference>
<dbReference type="Gene3D" id="3.40.250.10">
    <property type="entry name" value="Rhodanese-like domain"/>
    <property type="match status" value="1"/>
</dbReference>
<dbReference type="HAMAP" id="MF_01622">
    <property type="entry name" value="tRNA_sel_U_synth"/>
    <property type="match status" value="1"/>
</dbReference>
<dbReference type="InterPro" id="IPR001763">
    <property type="entry name" value="Rhodanese-like_dom"/>
</dbReference>
<dbReference type="InterPro" id="IPR036873">
    <property type="entry name" value="Rhodanese-like_dom_sf"/>
</dbReference>
<dbReference type="InterPro" id="IPR017582">
    <property type="entry name" value="SelU"/>
</dbReference>
<dbReference type="NCBIfam" id="NF008750">
    <property type="entry name" value="PRK11784.1-2"/>
    <property type="match status" value="1"/>
</dbReference>
<dbReference type="NCBIfam" id="NF008751">
    <property type="entry name" value="PRK11784.1-3"/>
    <property type="match status" value="1"/>
</dbReference>
<dbReference type="NCBIfam" id="TIGR03167">
    <property type="entry name" value="tRNA_sel_U_synt"/>
    <property type="match status" value="1"/>
</dbReference>
<dbReference type="PANTHER" id="PTHR30401">
    <property type="entry name" value="TRNA 2-SELENOURIDINE SYNTHASE"/>
    <property type="match status" value="1"/>
</dbReference>
<dbReference type="PANTHER" id="PTHR30401:SF0">
    <property type="entry name" value="TRNA 2-SELENOURIDINE SYNTHASE"/>
    <property type="match status" value="1"/>
</dbReference>
<dbReference type="SMART" id="SM00450">
    <property type="entry name" value="RHOD"/>
    <property type="match status" value="1"/>
</dbReference>
<dbReference type="SUPFAM" id="SSF52821">
    <property type="entry name" value="Rhodanese/Cell cycle control phosphatase"/>
    <property type="match status" value="1"/>
</dbReference>
<dbReference type="PROSITE" id="PS50206">
    <property type="entry name" value="RHODANESE_3"/>
    <property type="match status" value="1"/>
</dbReference>
<name>SELU_PSEPF</name>
<keyword id="KW-0711">Selenium</keyword>
<keyword id="KW-0808">Transferase</keyword>